<keyword id="KW-0067">ATP-binding</keyword>
<keyword id="KW-0169">Cobalamin biosynthesis</keyword>
<keyword id="KW-0315">Glutamine amidotransferase</keyword>
<keyword id="KW-0436">Ligase</keyword>
<keyword id="KW-0460">Magnesium</keyword>
<keyword id="KW-0547">Nucleotide-binding</keyword>
<keyword id="KW-1185">Reference proteome</keyword>
<protein>
    <recommendedName>
        <fullName evidence="1">Cobyrinate a,c-diamide synthase</fullName>
        <ecNumber evidence="1">6.3.5.11</ecNumber>
    </recommendedName>
    <alternativeName>
        <fullName evidence="1">Cobyrinic acid a,c-diamide synthetase</fullName>
    </alternativeName>
</protein>
<feature type="chain" id="PRO_1000074389" description="Cobyrinate a,c-diamide synthase">
    <location>
        <begin position="1"/>
        <end position="438"/>
    </location>
</feature>
<feature type="domain" description="GATase cobBQ-type" evidence="1">
    <location>
        <begin position="242"/>
        <end position="426"/>
    </location>
</feature>
<feature type="active site" description="Nucleophile" evidence="1">
    <location>
        <position position="325"/>
    </location>
</feature>
<feature type="site" description="Increases nucleophilicity of active site Cys" evidence="1">
    <location>
        <position position="418"/>
    </location>
</feature>
<name>CBIA_HERAR</name>
<organism>
    <name type="scientific">Herminiimonas arsenicoxydans</name>
    <dbReference type="NCBI Taxonomy" id="204773"/>
    <lineage>
        <taxon>Bacteria</taxon>
        <taxon>Pseudomonadati</taxon>
        <taxon>Pseudomonadota</taxon>
        <taxon>Betaproteobacteria</taxon>
        <taxon>Burkholderiales</taxon>
        <taxon>Oxalobacteraceae</taxon>
        <taxon>Herminiimonas</taxon>
    </lineage>
</organism>
<comment type="function">
    <text evidence="1">Catalyzes the ATP-dependent amidation of the two carboxylate groups at positions a and c of cobyrinate, using either L-glutamine or ammonia as the nitrogen source.</text>
</comment>
<comment type="catalytic activity">
    <reaction evidence="1">
        <text>cob(II)yrinate + 2 L-glutamine + 2 ATP + 2 H2O = cob(II)yrinate a,c diamide + 2 L-glutamate + 2 ADP + 2 phosphate + 2 H(+)</text>
        <dbReference type="Rhea" id="RHEA:26289"/>
        <dbReference type="ChEBI" id="CHEBI:15377"/>
        <dbReference type="ChEBI" id="CHEBI:15378"/>
        <dbReference type="ChEBI" id="CHEBI:29985"/>
        <dbReference type="ChEBI" id="CHEBI:30616"/>
        <dbReference type="ChEBI" id="CHEBI:43474"/>
        <dbReference type="ChEBI" id="CHEBI:58359"/>
        <dbReference type="ChEBI" id="CHEBI:58537"/>
        <dbReference type="ChEBI" id="CHEBI:58894"/>
        <dbReference type="ChEBI" id="CHEBI:456216"/>
        <dbReference type="EC" id="6.3.5.11"/>
    </reaction>
</comment>
<comment type="cofactor">
    <cofactor evidence="1">
        <name>Mg(2+)</name>
        <dbReference type="ChEBI" id="CHEBI:18420"/>
    </cofactor>
</comment>
<comment type="pathway">
    <text evidence="1">Cofactor biosynthesis; adenosylcobalamin biosynthesis; cob(II)yrinate a,c-diamide from sirohydrochlorin (anaerobic route): step 10/10.</text>
</comment>
<comment type="domain">
    <text evidence="1">Comprises of two domains. The C-terminal domain contains the binding site for glutamine and catalyzes the hydrolysis of this substrate to glutamate and ammonia. The N-terminal domain is anticipated to bind ATP and cobyrinate and catalyzes the ultimate synthesis of the diamide product. The ammonia produced via the glutaminase domain is probably translocated to the adjacent domain via a molecular tunnel, where it reacts with an activated intermediate.</text>
</comment>
<comment type="miscellaneous">
    <text evidence="1">The a and c carboxylates of cobyrinate are activated for nucleophilic attack via formation of a phosphorylated intermediate by ATP. CbiA catalyzes first the amidation of the c-carboxylate, and then that of the a-carboxylate.</text>
</comment>
<comment type="similarity">
    <text evidence="1">Belongs to the CobB/CbiA family.</text>
</comment>
<dbReference type="EC" id="6.3.5.11" evidence="1"/>
<dbReference type="EMBL" id="CU207211">
    <property type="protein sequence ID" value="CAL61148.1"/>
    <property type="molecule type" value="Genomic_DNA"/>
</dbReference>
<dbReference type="SMR" id="A4G3R1"/>
<dbReference type="STRING" id="204773.HEAR0965"/>
<dbReference type="KEGG" id="har:HEAR0965"/>
<dbReference type="eggNOG" id="COG1797">
    <property type="taxonomic scope" value="Bacteria"/>
</dbReference>
<dbReference type="HOGENOM" id="CLU_022752_0_2_4"/>
<dbReference type="OrthoDB" id="9764035at2"/>
<dbReference type="UniPathway" id="UPA00148">
    <property type="reaction ID" value="UER00231"/>
</dbReference>
<dbReference type="Proteomes" id="UP000006697">
    <property type="component" value="Chromosome"/>
</dbReference>
<dbReference type="GO" id="GO:0005524">
    <property type="term" value="F:ATP binding"/>
    <property type="evidence" value="ECO:0007669"/>
    <property type="project" value="UniProtKB-UniRule"/>
</dbReference>
<dbReference type="GO" id="GO:0042242">
    <property type="term" value="F:cobyrinic acid a,c-diamide synthase activity"/>
    <property type="evidence" value="ECO:0007669"/>
    <property type="project" value="UniProtKB-UniRule"/>
</dbReference>
<dbReference type="GO" id="GO:0009236">
    <property type="term" value="P:cobalamin biosynthetic process"/>
    <property type="evidence" value="ECO:0007669"/>
    <property type="project" value="UniProtKB-UniRule"/>
</dbReference>
<dbReference type="CDD" id="cd05388">
    <property type="entry name" value="CobB_N"/>
    <property type="match status" value="1"/>
</dbReference>
<dbReference type="CDD" id="cd03130">
    <property type="entry name" value="GATase1_CobB"/>
    <property type="match status" value="1"/>
</dbReference>
<dbReference type="Gene3D" id="3.40.50.880">
    <property type="match status" value="1"/>
</dbReference>
<dbReference type="Gene3D" id="3.40.50.300">
    <property type="entry name" value="P-loop containing nucleotide triphosphate hydrolases"/>
    <property type="match status" value="2"/>
</dbReference>
<dbReference type="HAMAP" id="MF_00027">
    <property type="entry name" value="CobB_CbiA"/>
    <property type="match status" value="1"/>
</dbReference>
<dbReference type="InterPro" id="IPR004484">
    <property type="entry name" value="CbiA/CobB_synth"/>
</dbReference>
<dbReference type="InterPro" id="IPR029062">
    <property type="entry name" value="Class_I_gatase-like"/>
</dbReference>
<dbReference type="InterPro" id="IPR002586">
    <property type="entry name" value="CobQ/CobB/MinD/ParA_Nub-bd_dom"/>
</dbReference>
<dbReference type="InterPro" id="IPR011698">
    <property type="entry name" value="GATase_3"/>
</dbReference>
<dbReference type="InterPro" id="IPR027417">
    <property type="entry name" value="P-loop_NTPase"/>
</dbReference>
<dbReference type="NCBIfam" id="TIGR00379">
    <property type="entry name" value="cobB"/>
    <property type="match status" value="1"/>
</dbReference>
<dbReference type="NCBIfam" id="NF002204">
    <property type="entry name" value="PRK01077.1"/>
    <property type="match status" value="1"/>
</dbReference>
<dbReference type="PANTHER" id="PTHR43873">
    <property type="entry name" value="COBYRINATE A,C-DIAMIDE SYNTHASE"/>
    <property type="match status" value="1"/>
</dbReference>
<dbReference type="PANTHER" id="PTHR43873:SF1">
    <property type="entry name" value="COBYRINATE A,C-DIAMIDE SYNTHASE"/>
    <property type="match status" value="1"/>
</dbReference>
<dbReference type="Pfam" id="PF01656">
    <property type="entry name" value="CbiA"/>
    <property type="match status" value="1"/>
</dbReference>
<dbReference type="Pfam" id="PF07685">
    <property type="entry name" value="GATase_3"/>
    <property type="match status" value="1"/>
</dbReference>
<dbReference type="SUPFAM" id="SSF52317">
    <property type="entry name" value="Class I glutamine amidotransferase-like"/>
    <property type="match status" value="1"/>
</dbReference>
<dbReference type="SUPFAM" id="SSF52540">
    <property type="entry name" value="P-loop containing nucleoside triphosphate hydrolases"/>
    <property type="match status" value="1"/>
</dbReference>
<dbReference type="PROSITE" id="PS51274">
    <property type="entry name" value="GATASE_COBBQ"/>
    <property type="match status" value="1"/>
</dbReference>
<accession>A4G3R1</accession>
<proteinExistence type="inferred from homology"/>
<reference key="1">
    <citation type="journal article" date="2007" name="PLoS Genet.">
        <title>A tale of two oxidation states: bacterial colonization of arsenic-rich environments.</title>
        <authorList>
            <person name="Muller D."/>
            <person name="Medigue C."/>
            <person name="Koechler S."/>
            <person name="Barbe V."/>
            <person name="Barakat M."/>
            <person name="Talla E."/>
            <person name="Bonnefoy V."/>
            <person name="Krin E."/>
            <person name="Arsene-Ploetze F."/>
            <person name="Carapito C."/>
            <person name="Chandler M."/>
            <person name="Cournoyer B."/>
            <person name="Cruveiller S."/>
            <person name="Dossat C."/>
            <person name="Duval S."/>
            <person name="Heymann M."/>
            <person name="Leize E."/>
            <person name="Lieutaud A."/>
            <person name="Lievremont D."/>
            <person name="Makita Y."/>
            <person name="Mangenot S."/>
            <person name="Nitschke W."/>
            <person name="Ortet P."/>
            <person name="Perdrial N."/>
            <person name="Schoepp B."/>
            <person name="Siguier P."/>
            <person name="Simeonova D.D."/>
            <person name="Rouy Z."/>
            <person name="Segurens B."/>
            <person name="Turlin E."/>
            <person name="Vallenet D."/>
            <person name="van Dorsselaer A."/>
            <person name="Weiss S."/>
            <person name="Weissenbach J."/>
            <person name="Lett M.-C."/>
            <person name="Danchin A."/>
            <person name="Bertin P.N."/>
        </authorList>
    </citation>
    <scope>NUCLEOTIDE SEQUENCE [LARGE SCALE GENOMIC DNA]</scope>
    <source>
        <strain>ULPAs1</strain>
    </source>
</reference>
<gene>
    <name evidence="1" type="primary">cbiA</name>
    <name type="ordered locus">HEAR0965</name>
</gene>
<sequence length="438" mass="46549">MVMSSPTNSARIILISGIASGQGKTTVTAALARKLIRQGLRVRVFKTGPDYLDPMILQRASGAEVYALDLWMVGLDDCRRLLARAASEVDVILIEGVMGLYDGDPSSADLARAFGVPVVVVLDAAKMAQTVGAVVLGLQQYGPVDLAGVIVNRLASPSHASMVTRGIRNVPILATLPKQQQALPERHLGLVQPDEIAQVDQVLDQLADQIEIDMVAWDAIAPVVLDGSLAAASTQQLLAGKTIAIARDAAFAFVYHANLECLRAAGAQLKFFSPLNDETIPAEADAVYIPGGYPELHCATLSSAQRWQDSMRAAHVRNMPILAECGGMMVIADSLIDAQGKKWPMVGLIPGEVAMQGKLAGLGMQSLATEDGELRGHAFHYSTLSTPVEPQAQTVKRSNGAHGEAVYKQGALTATYFHAYFSSCPAATARIFSPEIKA</sequence>
<evidence type="ECO:0000255" key="1">
    <source>
        <dbReference type="HAMAP-Rule" id="MF_00027"/>
    </source>
</evidence>